<keyword id="KW-1035">Host cytoplasm</keyword>
<keyword id="KW-1048">Host nucleus</keyword>
<keyword id="KW-0509">mRNA transport</keyword>
<keyword id="KW-0694">RNA-binding</keyword>
<keyword id="KW-0813">Transport</keyword>
<accession>P27971</accession>
<protein>
    <recommendedName>
        <fullName>Protein Rev</fullName>
    </recommendedName>
    <alternativeName>
        <fullName>Regulator of expression of viral proteins</fullName>
    </alternativeName>
</protein>
<reference key="1">
    <citation type="journal article" date="1990" name="J. Virol.">
        <title>Simian immunodeficiency viruses from African green monkeys display unusual genetic diversity.</title>
        <authorList>
            <person name="Johnson P.R."/>
            <person name="Fomsgaard A."/>
            <person name="Allan J.S."/>
            <person name="Gravell M."/>
            <person name="London W.T."/>
            <person name="Olmstead R.A."/>
            <person name="Hirsch V.M."/>
        </authorList>
    </citation>
    <scope>NUCLEOTIDE SEQUENCE [GENOMIC RNA]</scope>
</reference>
<organismHost>
    <name type="scientific">Cercopithecidae</name>
    <name type="common">Old World monkeys</name>
    <dbReference type="NCBI Taxonomy" id="9527"/>
</organismHost>
<sequence>MPLGPEERRLLRLIAFLYRSNPYPSVEGTARQRRRARRRWKNRQKQIYALAERIWGTRQEDQLVQAIDQLVLDTQHLVTQQLPDPPSQA</sequence>
<name>REV_SIVV1</name>
<proteinExistence type="inferred from homology"/>
<feature type="chain" id="PRO_0000085291" description="Protein Rev">
    <location>
        <begin position="1"/>
        <end position="89"/>
    </location>
</feature>
<feature type="region of interest" description="Homomultimerization" evidence="1">
    <location>
        <begin position="13"/>
        <end position="21"/>
    </location>
</feature>
<feature type="short sequence motif" description="Nuclear localization signal and RNA-binding (RRE)" evidence="1">
    <location>
        <begin position="29"/>
        <end position="45"/>
    </location>
</feature>
<feature type="short sequence motif" description="Nuclear export signal" evidence="1">
    <location>
        <begin position="70"/>
        <end position="82"/>
    </location>
</feature>
<gene>
    <name type="primary">rev</name>
</gene>
<organism>
    <name type="scientific">Simian immunodeficiency virus agm.vervet (isolate AGM155)</name>
    <name type="common">SIV-agm.ver</name>
    <name type="synonym">Simian immunodeficiency virus African green monkey vervet</name>
    <dbReference type="NCBI Taxonomy" id="11727"/>
    <lineage>
        <taxon>Viruses</taxon>
        <taxon>Riboviria</taxon>
        <taxon>Pararnavirae</taxon>
        <taxon>Artverviricota</taxon>
        <taxon>Revtraviricetes</taxon>
        <taxon>Ortervirales</taxon>
        <taxon>Retroviridae</taxon>
        <taxon>Orthoretrovirinae</taxon>
        <taxon>Lentivirus</taxon>
        <taxon>Simian immunodeficiency virus</taxon>
    </lineage>
</organism>
<evidence type="ECO:0000250" key="1"/>
<comment type="function">
    <text evidence="1">Escorts unspliced or incompletely spliced viral pre-mRNAs (late transcripts) out of the nucleus of infected cells. These pre-mRNAs carry a recognition sequence called Rev responsive element (RRE) located in the env gene, that is not present in fully spliced viral mRNAs (early transcripts). This function is essential since most viral proteins are translated from unspliced or partially spliced pre-mRNAs which cannot exit the nucleus by the pathway used by fully processed cellular mRNAs (By similarity).</text>
</comment>
<comment type="subunit">
    <text evidence="1">Homomultimer; when bound to the RRE. Multimeric assembly is essential for activity (By similarity).</text>
</comment>
<comment type="subcellular location">
    <subcellularLocation>
        <location>Host nucleus</location>
        <location>Host nucleolus</location>
    </subcellularLocation>
    <subcellularLocation>
        <location>Host cytoplasm</location>
    </subcellularLocation>
    <text evidence="1">The presence of both nuclear import and nuclear export signals leads to continuous shuttling between the nucleus and cytoplasm.</text>
</comment>
<comment type="domain">
    <text evidence="1">The RNA-binding motif binds to the RRE, a stem-and-loop structure present in incompletely spliced viral pre-mRNAs. This region also contains the NLS which mediates nuclear localization. These overlapping functions prevent Rev bound to RRE from undesirable return to the nucleus. When Rev binds the RRE, the NLS becomes masked while the NES remains accessible (By similarity).</text>
</comment>
<dbReference type="EMBL" id="M29975">
    <property type="protein sequence ID" value="AAA91910.1"/>
    <property type="molecule type" value="Genomic_RNA"/>
</dbReference>
<dbReference type="SMR" id="P27971"/>
<dbReference type="Proteomes" id="UP000258159">
    <property type="component" value="Segment"/>
</dbReference>
<dbReference type="GO" id="GO:0030430">
    <property type="term" value="C:host cell cytoplasm"/>
    <property type="evidence" value="ECO:0007669"/>
    <property type="project" value="UniProtKB-SubCell"/>
</dbReference>
<dbReference type="GO" id="GO:0044196">
    <property type="term" value="C:host cell nucleolus"/>
    <property type="evidence" value="ECO:0007669"/>
    <property type="project" value="UniProtKB-SubCell"/>
</dbReference>
<dbReference type="GO" id="GO:0003700">
    <property type="term" value="F:DNA-binding transcription factor activity"/>
    <property type="evidence" value="ECO:0007669"/>
    <property type="project" value="InterPro"/>
</dbReference>
<dbReference type="GO" id="GO:0003723">
    <property type="term" value="F:RNA binding"/>
    <property type="evidence" value="ECO:0007669"/>
    <property type="project" value="UniProtKB-KW"/>
</dbReference>
<dbReference type="GO" id="GO:0051028">
    <property type="term" value="P:mRNA transport"/>
    <property type="evidence" value="ECO:0007669"/>
    <property type="project" value="UniProtKB-KW"/>
</dbReference>
<dbReference type="Gene3D" id="6.10.140.630">
    <property type="match status" value="1"/>
</dbReference>
<dbReference type="InterPro" id="IPR000625">
    <property type="entry name" value="REV_protein"/>
</dbReference>
<dbReference type="Pfam" id="PF00424">
    <property type="entry name" value="REV"/>
    <property type="match status" value="1"/>
</dbReference>